<organism>
    <name type="scientific">Mycobacteroides abscessus (strain ATCC 19977 / DSM 44196 / CCUG 20993 / CIP 104536 / JCM 13569 / NCTC 13031 / TMC 1543 / L948)</name>
    <name type="common">Mycobacterium abscessus</name>
    <dbReference type="NCBI Taxonomy" id="561007"/>
    <lineage>
        <taxon>Bacteria</taxon>
        <taxon>Bacillati</taxon>
        <taxon>Actinomycetota</taxon>
        <taxon>Actinomycetes</taxon>
        <taxon>Mycobacteriales</taxon>
        <taxon>Mycobacteriaceae</taxon>
        <taxon>Mycobacteroides</taxon>
        <taxon>Mycobacteroides abscessus</taxon>
    </lineage>
</organism>
<sequence>MHVHVVEHPLAAARLTTLRDARSDNAAFRTALRDLTLMLVYEATGSVPVESSTVRTPVAETTGYRLANPPLLVPVLRAGLGMVDQAHALIPEARVGFVGMARDEDTWQPTPYLESLPADLSAQPVFVLDPMLATGGSMVYTLELLHARGAADITMLCVVAAPQGVTAIQECAERFGPSTSVRLFTATIDEGLNDAAYIVPGLGDAGDRQFGPR</sequence>
<accession>B1MFZ1</accession>
<dbReference type="EC" id="2.4.2.9" evidence="1"/>
<dbReference type="EMBL" id="CU458896">
    <property type="protein sequence ID" value="CAM63736.1"/>
    <property type="molecule type" value="Genomic_DNA"/>
</dbReference>
<dbReference type="RefSeq" id="WP_005116009.1">
    <property type="nucleotide sequence ID" value="NZ_MLCG01000001.1"/>
</dbReference>
<dbReference type="SMR" id="B1MFZ1"/>
<dbReference type="GeneID" id="93380601"/>
<dbReference type="KEGG" id="mab:MAB_3662c"/>
<dbReference type="UniPathway" id="UPA00574">
    <property type="reaction ID" value="UER00636"/>
</dbReference>
<dbReference type="Proteomes" id="UP000007137">
    <property type="component" value="Chromosome"/>
</dbReference>
<dbReference type="GO" id="GO:0005525">
    <property type="term" value="F:GTP binding"/>
    <property type="evidence" value="ECO:0007669"/>
    <property type="project" value="UniProtKB-KW"/>
</dbReference>
<dbReference type="GO" id="GO:0000287">
    <property type="term" value="F:magnesium ion binding"/>
    <property type="evidence" value="ECO:0007669"/>
    <property type="project" value="UniProtKB-UniRule"/>
</dbReference>
<dbReference type="GO" id="GO:0004845">
    <property type="term" value="F:uracil phosphoribosyltransferase activity"/>
    <property type="evidence" value="ECO:0007669"/>
    <property type="project" value="UniProtKB-UniRule"/>
</dbReference>
<dbReference type="GO" id="GO:0044206">
    <property type="term" value="P:UMP salvage"/>
    <property type="evidence" value="ECO:0007669"/>
    <property type="project" value="UniProtKB-UniRule"/>
</dbReference>
<dbReference type="GO" id="GO:0006223">
    <property type="term" value="P:uracil salvage"/>
    <property type="evidence" value="ECO:0007669"/>
    <property type="project" value="InterPro"/>
</dbReference>
<dbReference type="CDD" id="cd06223">
    <property type="entry name" value="PRTases_typeI"/>
    <property type="match status" value="1"/>
</dbReference>
<dbReference type="FunFam" id="3.40.50.2020:FF:000003">
    <property type="entry name" value="Uracil phosphoribosyltransferase"/>
    <property type="match status" value="1"/>
</dbReference>
<dbReference type="Gene3D" id="3.40.50.2020">
    <property type="match status" value="1"/>
</dbReference>
<dbReference type="HAMAP" id="MF_01218_B">
    <property type="entry name" value="Upp_B"/>
    <property type="match status" value="1"/>
</dbReference>
<dbReference type="InterPro" id="IPR000836">
    <property type="entry name" value="PRibTrfase_dom"/>
</dbReference>
<dbReference type="InterPro" id="IPR029057">
    <property type="entry name" value="PRTase-like"/>
</dbReference>
<dbReference type="InterPro" id="IPR034332">
    <property type="entry name" value="Upp_B"/>
</dbReference>
<dbReference type="InterPro" id="IPR050054">
    <property type="entry name" value="UPRTase/APRTase"/>
</dbReference>
<dbReference type="InterPro" id="IPR005765">
    <property type="entry name" value="Ura_phspho_trans"/>
</dbReference>
<dbReference type="NCBIfam" id="NF001097">
    <property type="entry name" value="PRK00129.1"/>
    <property type="match status" value="1"/>
</dbReference>
<dbReference type="NCBIfam" id="TIGR01091">
    <property type="entry name" value="upp"/>
    <property type="match status" value="1"/>
</dbReference>
<dbReference type="PANTHER" id="PTHR32315">
    <property type="entry name" value="ADENINE PHOSPHORIBOSYLTRANSFERASE"/>
    <property type="match status" value="1"/>
</dbReference>
<dbReference type="PANTHER" id="PTHR32315:SF4">
    <property type="entry name" value="URACIL PHOSPHORIBOSYLTRANSFERASE, CHLOROPLASTIC"/>
    <property type="match status" value="1"/>
</dbReference>
<dbReference type="Pfam" id="PF14681">
    <property type="entry name" value="UPRTase"/>
    <property type="match status" value="1"/>
</dbReference>
<dbReference type="SUPFAM" id="SSF53271">
    <property type="entry name" value="PRTase-like"/>
    <property type="match status" value="1"/>
</dbReference>
<name>UPP_MYCA9</name>
<protein>
    <recommendedName>
        <fullName evidence="1">Uracil phosphoribosyltransferase</fullName>
        <ecNumber evidence="1">2.4.2.9</ecNumber>
    </recommendedName>
    <alternativeName>
        <fullName evidence="1">UMP pyrophosphorylase</fullName>
    </alternativeName>
    <alternativeName>
        <fullName evidence="1">UPRTase</fullName>
    </alternativeName>
</protein>
<proteinExistence type="inferred from homology"/>
<comment type="function">
    <text evidence="1">Catalyzes the conversion of uracil and 5-phospho-alpha-D-ribose 1-diphosphate (PRPP) to UMP and diphosphate.</text>
</comment>
<comment type="catalytic activity">
    <reaction evidence="1">
        <text>UMP + diphosphate = 5-phospho-alpha-D-ribose 1-diphosphate + uracil</text>
        <dbReference type="Rhea" id="RHEA:13017"/>
        <dbReference type="ChEBI" id="CHEBI:17568"/>
        <dbReference type="ChEBI" id="CHEBI:33019"/>
        <dbReference type="ChEBI" id="CHEBI:57865"/>
        <dbReference type="ChEBI" id="CHEBI:58017"/>
        <dbReference type="EC" id="2.4.2.9"/>
    </reaction>
</comment>
<comment type="cofactor">
    <cofactor evidence="1">
        <name>Mg(2+)</name>
        <dbReference type="ChEBI" id="CHEBI:18420"/>
    </cofactor>
    <text evidence="1">Binds 1 Mg(2+) ion per subunit. The magnesium is bound as Mg-PRPP.</text>
</comment>
<comment type="activity regulation">
    <text evidence="1">Allosterically activated by GTP.</text>
</comment>
<comment type="pathway">
    <text evidence="1">Pyrimidine metabolism; UMP biosynthesis via salvage pathway; UMP from uracil: step 1/1.</text>
</comment>
<comment type="similarity">
    <text evidence="1">Belongs to the UPRTase family.</text>
</comment>
<evidence type="ECO:0000255" key="1">
    <source>
        <dbReference type="HAMAP-Rule" id="MF_01218"/>
    </source>
</evidence>
<reference key="1">
    <citation type="journal article" date="2009" name="PLoS ONE">
        <title>Non mycobacterial virulence genes in the genome of the emerging pathogen Mycobacterium abscessus.</title>
        <authorList>
            <person name="Ripoll F."/>
            <person name="Pasek S."/>
            <person name="Schenowitz C."/>
            <person name="Dossat C."/>
            <person name="Barbe V."/>
            <person name="Rottman M."/>
            <person name="Macheras E."/>
            <person name="Heym B."/>
            <person name="Herrmann J.L."/>
            <person name="Daffe M."/>
            <person name="Brosch R."/>
            <person name="Risler J.L."/>
            <person name="Gaillard J.L."/>
        </authorList>
    </citation>
    <scope>NUCLEOTIDE SEQUENCE [LARGE SCALE GENOMIC DNA]</scope>
    <source>
        <strain>ATCC 19977 / DSM 44196 / CCUG 20993 / CIP 104536 / JCM 13569 / NCTC 13031 / TMC 1543 / L948</strain>
    </source>
</reference>
<gene>
    <name evidence="1" type="primary">upp</name>
    <name type="ordered locus">MAB_3662c</name>
</gene>
<feature type="chain" id="PRO_1000139142" description="Uracil phosphoribosyltransferase">
    <location>
        <begin position="1"/>
        <end position="213"/>
    </location>
</feature>
<feature type="binding site" evidence="1">
    <location>
        <position position="77"/>
    </location>
    <ligand>
        <name>5-phospho-alpha-D-ribose 1-diphosphate</name>
        <dbReference type="ChEBI" id="CHEBI:58017"/>
    </ligand>
</feature>
<feature type="binding site" evidence="1">
    <location>
        <position position="102"/>
    </location>
    <ligand>
        <name>5-phospho-alpha-D-ribose 1-diphosphate</name>
        <dbReference type="ChEBI" id="CHEBI:58017"/>
    </ligand>
</feature>
<feature type="binding site" evidence="1">
    <location>
        <begin position="129"/>
        <end position="137"/>
    </location>
    <ligand>
        <name>5-phospho-alpha-D-ribose 1-diphosphate</name>
        <dbReference type="ChEBI" id="CHEBI:58017"/>
    </ligand>
</feature>
<feature type="binding site" evidence="1">
    <location>
        <position position="198"/>
    </location>
    <ligand>
        <name>uracil</name>
        <dbReference type="ChEBI" id="CHEBI:17568"/>
    </ligand>
</feature>
<feature type="binding site" evidence="1">
    <location>
        <begin position="203"/>
        <end position="205"/>
    </location>
    <ligand>
        <name>uracil</name>
        <dbReference type="ChEBI" id="CHEBI:17568"/>
    </ligand>
</feature>
<feature type="binding site" evidence="1">
    <location>
        <position position="204"/>
    </location>
    <ligand>
        <name>5-phospho-alpha-D-ribose 1-diphosphate</name>
        <dbReference type="ChEBI" id="CHEBI:58017"/>
    </ligand>
</feature>
<keyword id="KW-0021">Allosteric enzyme</keyword>
<keyword id="KW-0328">Glycosyltransferase</keyword>
<keyword id="KW-0342">GTP-binding</keyword>
<keyword id="KW-0460">Magnesium</keyword>
<keyword id="KW-0547">Nucleotide-binding</keyword>
<keyword id="KW-1185">Reference proteome</keyword>
<keyword id="KW-0808">Transferase</keyword>